<protein>
    <recommendedName>
        <fullName evidence="1">UPF0145 protein YbjQ</fullName>
    </recommendedName>
</protein>
<comment type="similarity">
    <text evidence="1">Belongs to the UPF0145 family.</text>
</comment>
<gene>
    <name evidence="1" type="primary">ybjQ</name>
    <name type="ordered locus">SBO_0799</name>
</gene>
<dbReference type="EMBL" id="CP000036">
    <property type="protein sequence ID" value="ABB65472.1"/>
    <property type="molecule type" value="Genomic_DNA"/>
</dbReference>
<dbReference type="RefSeq" id="WP_001160737.1">
    <property type="nucleotide sequence ID" value="NC_007613.1"/>
</dbReference>
<dbReference type="SMR" id="Q323N6"/>
<dbReference type="KEGG" id="sbo:SBO_0799"/>
<dbReference type="HOGENOM" id="CLU_117144_3_0_6"/>
<dbReference type="Proteomes" id="UP000007067">
    <property type="component" value="Chromosome"/>
</dbReference>
<dbReference type="Gene3D" id="3.30.110.70">
    <property type="entry name" value="Hypothetical protein apc22750. Chain B"/>
    <property type="match status" value="1"/>
</dbReference>
<dbReference type="HAMAP" id="MF_00338">
    <property type="entry name" value="UPF0145"/>
    <property type="match status" value="1"/>
</dbReference>
<dbReference type="InterPro" id="IPR035439">
    <property type="entry name" value="UPF0145_dom_sf"/>
</dbReference>
<dbReference type="InterPro" id="IPR002765">
    <property type="entry name" value="UPF0145_YbjQ-like"/>
</dbReference>
<dbReference type="NCBIfam" id="NF002776">
    <property type="entry name" value="PRK02877.1"/>
    <property type="match status" value="1"/>
</dbReference>
<dbReference type="PANTHER" id="PTHR34068">
    <property type="entry name" value="UPF0145 PROTEIN YBJQ"/>
    <property type="match status" value="1"/>
</dbReference>
<dbReference type="PANTHER" id="PTHR34068:SF1">
    <property type="entry name" value="UPF0145 PROTEIN YBJQ"/>
    <property type="match status" value="1"/>
</dbReference>
<dbReference type="Pfam" id="PF01906">
    <property type="entry name" value="YbjQ_1"/>
    <property type="match status" value="1"/>
</dbReference>
<dbReference type="SUPFAM" id="SSF117782">
    <property type="entry name" value="YbjQ-like"/>
    <property type="match status" value="1"/>
</dbReference>
<organism>
    <name type="scientific">Shigella boydii serotype 4 (strain Sb227)</name>
    <dbReference type="NCBI Taxonomy" id="300268"/>
    <lineage>
        <taxon>Bacteria</taxon>
        <taxon>Pseudomonadati</taxon>
        <taxon>Pseudomonadota</taxon>
        <taxon>Gammaproteobacteria</taxon>
        <taxon>Enterobacterales</taxon>
        <taxon>Enterobacteriaceae</taxon>
        <taxon>Shigella</taxon>
    </lineage>
</organism>
<accession>Q323N6</accession>
<sequence length="107" mass="11437">MQFSTTPTLEGQTIVEYCGVVTGEAILGANIFRDFFAGIRDIVGGRSGAYEKELRKAREIAFEELGSQARALGADAVVGIDIDYETVGQNGSMLMVSVSGTAVKTRR</sequence>
<name>YBJQ_SHIBS</name>
<proteinExistence type="inferred from homology"/>
<reference key="1">
    <citation type="journal article" date="2005" name="Nucleic Acids Res.">
        <title>Genome dynamics and diversity of Shigella species, the etiologic agents of bacillary dysentery.</title>
        <authorList>
            <person name="Yang F."/>
            <person name="Yang J."/>
            <person name="Zhang X."/>
            <person name="Chen L."/>
            <person name="Jiang Y."/>
            <person name="Yan Y."/>
            <person name="Tang X."/>
            <person name="Wang J."/>
            <person name="Xiong Z."/>
            <person name="Dong J."/>
            <person name="Xue Y."/>
            <person name="Zhu Y."/>
            <person name="Xu X."/>
            <person name="Sun L."/>
            <person name="Chen S."/>
            <person name="Nie H."/>
            <person name="Peng J."/>
            <person name="Xu J."/>
            <person name="Wang Y."/>
            <person name="Yuan Z."/>
            <person name="Wen Y."/>
            <person name="Yao Z."/>
            <person name="Shen Y."/>
            <person name="Qiang B."/>
            <person name="Hou Y."/>
            <person name="Yu J."/>
            <person name="Jin Q."/>
        </authorList>
    </citation>
    <scope>NUCLEOTIDE SEQUENCE [LARGE SCALE GENOMIC DNA]</scope>
    <source>
        <strain>Sb227</strain>
    </source>
</reference>
<feature type="chain" id="PRO_0000225844" description="UPF0145 protein YbjQ">
    <location>
        <begin position="1"/>
        <end position="107"/>
    </location>
</feature>
<evidence type="ECO:0000255" key="1">
    <source>
        <dbReference type="HAMAP-Rule" id="MF_00338"/>
    </source>
</evidence>